<reference key="1">
    <citation type="journal article" date="2007" name="Theor. Appl. Genet.">
        <title>Complete chloroplast genome sequences of Hordeum vulgare, Sorghum bicolor and Agrostis stolonifera, and comparative analyses with other grass genomes.</title>
        <authorList>
            <person name="Saski C."/>
            <person name="Lee S.-B."/>
            <person name="Fjellheim S."/>
            <person name="Guda C."/>
            <person name="Jansen R.K."/>
            <person name="Luo H."/>
            <person name="Tomkins J."/>
            <person name="Rognli O.A."/>
            <person name="Daniell H."/>
            <person name="Clarke J.L."/>
        </authorList>
    </citation>
    <scope>NUCLEOTIDE SEQUENCE [LARGE SCALE GENOMIC DNA]</scope>
    <source>
        <strain>cv. BTx623</strain>
    </source>
</reference>
<dbReference type="EMBL" id="EF115542">
    <property type="protein sequence ID" value="ABK79485.1"/>
    <property type="molecule type" value="Genomic_DNA"/>
</dbReference>
<dbReference type="RefSeq" id="YP_899396.1">
    <property type="nucleotide sequence ID" value="NC_008602.1"/>
</dbReference>
<dbReference type="SMR" id="A1E9R3"/>
<dbReference type="FunCoup" id="A1E9R3">
    <property type="interactions" value="55"/>
</dbReference>
<dbReference type="GeneID" id="4549130"/>
<dbReference type="KEGG" id="sbi:4549130"/>
<dbReference type="InParanoid" id="A1E9R3"/>
<dbReference type="Proteomes" id="UP000000768">
    <property type="component" value="Chloroplast"/>
</dbReference>
<dbReference type="GO" id="GO:0009535">
    <property type="term" value="C:chloroplast thylakoid membrane"/>
    <property type="evidence" value="ECO:0007669"/>
    <property type="project" value="UniProtKB-SubCell"/>
</dbReference>
<dbReference type="GO" id="GO:0009512">
    <property type="term" value="C:cytochrome b6f complex"/>
    <property type="evidence" value="ECO:0007669"/>
    <property type="project" value="InterPro"/>
</dbReference>
<dbReference type="GO" id="GO:0045158">
    <property type="term" value="F:electron transporter, transferring electrons within cytochrome b6/f complex of photosystem II activity"/>
    <property type="evidence" value="ECO:0007669"/>
    <property type="project" value="InterPro"/>
</dbReference>
<dbReference type="GO" id="GO:0017004">
    <property type="term" value="P:cytochrome complex assembly"/>
    <property type="evidence" value="ECO:0007669"/>
    <property type="project" value="UniProtKB-UniRule"/>
</dbReference>
<dbReference type="GO" id="GO:0015979">
    <property type="term" value="P:photosynthesis"/>
    <property type="evidence" value="ECO:0007669"/>
    <property type="project" value="UniProtKB-KW"/>
</dbReference>
<dbReference type="HAMAP" id="MF_00395">
    <property type="entry name" value="Cytb6_f_PetN"/>
    <property type="match status" value="1"/>
</dbReference>
<dbReference type="InterPro" id="IPR036143">
    <property type="entry name" value="Cytochr_b6-f_cplx_su8_sf"/>
</dbReference>
<dbReference type="InterPro" id="IPR005497">
    <property type="entry name" value="Cytochrome_b6-f_cplx_su8"/>
</dbReference>
<dbReference type="Pfam" id="PF03742">
    <property type="entry name" value="PetN"/>
    <property type="match status" value="1"/>
</dbReference>
<dbReference type="SUPFAM" id="SSF103451">
    <property type="entry name" value="PetN subunit of the cytochrome b6f complex"/>
    <property type="match status" value="1"/>
</dbReference>
<protein>
    <recommendedName>
        <fullName evidence="1">Cytochrome b6-f complex subunit 8</fullName>
    </recommendedName>
    <alternativeName>
        <fullName evidence="1">Cytochrome b6-f complex subunit PetN</fullName>
    </alternativeName>
    <alternativeName>
        <fullName evidence="1">Cytochrome b6-f complex subunit VIII</fullName>
    </alternativeName>
</protein>
<comment type="function">
    <text evidence="1">Component of the cytochrome b6-f complex, which mediates electron transfer between photosystem II (PSII) and photosystem I (PSI), cyclic electron flow around PSI, and state transitions.</text>
</comment>
<comment type="subunit">
    <text evidence="1">The 4 large subunits of the cytochrome b6-f complex are cytochrome b6, subunit IV (17 kDa polypeptide, PetD), cytochrome f and the Rieske protein, while the 4 small subunits are PetG, PetL, PetM and PetN. The complex functions as a dimer.</text>
</comment>
<comment type="subcellular location">
    <subcellularLocation>
        <location>Plastid</location>
        <location>Chloroplast thylakoid membrane</location>
        <topology>Single-pass membrane protein</topology>
    </subcellularLocation>
</comment>
<comment type="similarity">
    <text evidence="1">Belongs to the PetN family.</text>
</comment>
<name>PETN_SORBI</name>
<geneLocation type="chloroplast"/>
<evidence type="ECO:0000255" key="1">
    <source>
        <dbReference type="HAMAP-Rule" id="MF_00395"/>
    </source>
</evidence>
<accession>A1E9R3</accession>
<organism>
    <name type="scientific">Sorghum bicolor</name>
    <name type="common">Sorghum</name>
    <name type="synonym">Sorghum vulgare</name>
    <dbReference type="NCBI Taxonomy" id="4558"/>
    <lineage>
        <taxon>Eukaryota</taxon>
        <taxon>Viridiplantae</taxon>
        <taxon>Streptophyta</taxon>
        <taxon>Embryophyta</taxon>
        <taxon>Tracheophyta</taxon>
        <taxon>Spermatophyta</taxon>
        <taxon>Magnoliopsida</taxon>
        <taxon>Liliopsida</taxon>
        <taxon>Poales</taxon>
        <taxon>Poaceae</taxon>
        <taxon>PACMAD clade</taxon>
        <taxon>Panicoideae</taxon>
        <taxon>Andropogonodae</taxon>
        <taxon>Andropogoneae</taxon>
        <taxon>Sorghinae</taxon>
        <taxon>Sorghum</taxon>
    </lineage>
</organism>
<sequence length="29" mass="3170">MDIVSLAWAALMVVFTFSLSLVVWGRSGL</sequence>
<keyword id="KW-0150">Chloroplast</keyword>
<keyword id="KW-0249">Electron transport</keyword>
<keyword id="KW-0472">Membrane</keyword>
<keyword id="KW-0602">Photosynthesis</keyword>
<keyword id="KW-0934">Plastid</keyword>
<keyword id="KW-1185">Reference proteome</keyword>
<keyword id="KW-0793">Thylakoid</keyword>
<keyword id="KW-0812">Transmembrane</keyword>
<keyword id="KW-1133">Transmembrane helix</keyword>
<keyword id="KW-0813">Transport</keyword>
<feature type="chain" id="PRO_0000275567" description="Cytochrome b6-f complex subunit 8">
    <location>
        <begin position="1"/>
        <end position="29"/>
    </location>
</feature>
<feature type="transmembrane region" description="Helical" evidence="1">
    <location>
        <begin position="3"/>
        <end position="23"/>
    </location>
</feature>
<proteinExistence type="inferred from homology"/>
<gene>
    <name evidence="1" type="primary">petN</name>
</gene>